<dbReference type="EMBL" id="DQ339101">
    <property type="protein sequence ID" value="ABC70720.1"/>
    <property type="molecule type" value="Genomic_RNA"/>
</dbReference>
<dbReference type="Proteomes" id="UP000001985">
    <property type="component" value="Genome"/>
</dbReference>
<dbReference type="InterPro" id="IPR006841">
    <property type="entry name" value="Corona_NS2"/>
</dbReference>
<dbReference type="Pfam" id="PF04753">
    <property type="entry name" value="Corona_NS12-7"/>
    <property type="match status" value="1"/>
</dbReference>
<comment type="miscellaneous">
    <text>Isolate N5 belongs to genotype C. Genotype C probably arose from recombination between genotypes A and B.</text>
</comment>
<comment type="similarity">
    <text evidence="1">Belongs to the coronaviruses ns12.7 protein family.</text>
</comment>
<protein>
    <recommendedName>
        <fullName>Non-structural protein 4</fullName>
        <shortName>ns4</shortName>
    </recommendedName>
    <alternativeName>
        <fullName>Accessory protein 4</fullName>
    </alternativeName>
    <alternativeName>
        <fullName>Non-structural protein of 12.5 kDa</fullName>
        <shortName>ns12.5</shortName>
    </alternativeName>
    <alternativeName>
        <fullName>Orf4 protein</fullName>
    </alternativeName>
</protein>
<gene>
    <name type="ORF">4</name>
</gene>
<proteinExistence type="inferred from homology"/>
<evidence type="ECO:0000305" key="1"/>
<organism>
    <name type="scientific">Human coronavirus HKU1 (isolate N5)</name>
    <name type="common">HCoV-HKU1</name>
    <dbReference type="NCBI Taxonomy" id="443241"/>
    <lineage>
        <taxon>Viruses</taxon>
        <taxon>Riboviria</taxon>
        <taxon>Orthornavirae</taxon>
        <taxon>Pisuviricota</taxon>
        <taxon>Pisoniviricetes</taxon>
        <taxon>Nidovirales</taxon>
        <taxon>Cornidovirineae</taxon>
        <taxon>Coronaviridae</taxon>
        <taxon>Orthocoronavirinae</taxon>
        <taxon>Betacoronavirus</taxon>
        <taxon>Embecovirus</taxon>
        <taxon>Human coronavirus HKU1</taxon>
    </lineage>
</organism>
<accession>Q0ZME6</accession>
<name>NS12_CVHN5</name>
<organismHost>
    <name type="scientific">Homo sapiens</name>
    <name type="common">Human</name>
    <dbReference type="NCBI Taxonomy" id="9606"/>
</organismHost>
<feature type="chain" id="PRO_0000297772" description="Non-structural protein 4">
    <location>
        <begin position="1"/>
        <end position="109"/>
    </location>
</feature>
<reference key="1">
    <citation type="journal article" date="2006" name="J. Virol.">
        <title>Comparative analysis of 22 coronavirus HKU1 genomes reveals a novel genotype and evidence of natural recombination in coronavirus HKU1.</title>
        <authorList>
            <person name="Woo P.C.Y."/>
            <person name="Lau S.K.P."/>
            <person name="Yip C.C.Y."/>
            <person name="Huang Y."/>
            <person name="Tsoi H.-W."/>
            <person name="Chan K.-H."/>
            <person name="Yuen K.-Y."/>
        </authorList>
    </citation>
    <scope>NUCLEOTIDE SEQUENCE [GENOMIC RNA]</scope>
</reference>
<sequence length="109" mass="12567">MEVWRPSYKYSLITREFGVTDLEDLCFKYNYCQPCVGYCIVPLNVWCRKFGKFASYFVLRSHDTSHKNNFGVITSFTSYGNTVSEAVSKLVESASDFIAWRAEALNKYG</sequence>
<keyword id="KW-1185">Reference proteome</keyword>